<gene>
    <name type="ordered locus">SACOL1441</name>
</gene>
<dbReference type="EMBL" id="CP000046">
    <property type="protein sequence ID" value="AAW38186.1"/>
    <property type="molecule type" value="Genomic_DNA"/>
</dbReference>
<dbReference type="RefSeq" id="WP_000138413.1">
    <property type="nucleotide sequence ID" value="NZ_JBGOFO010000003.1"/>
</dbReference>
<dbReference type="SMR" id="Q5HG14"/>
<dbReference type="KEGG" id="sac:SACOL1441"/>
<dbReference type="HOGENOM" id="CLU_032111_0_0_9"/>
<dbReference type="Proteomes" id="UP000000530">
    <property type="component" value="Chromosome"/>
</dbReference>
<dbReference type="InterPro" id="IPR008863">
    <property type="entry name" value="Toxic_anion-R_TelA"/>
</dbReference>
<dbReference type="PANTHER" id="PTHR38432">
    <property type="entry name" value="TELA-LIKE PROTEIN SAOUHSC_01408"/>
    <property type="match status" value="1"/>
</dbReference>
<dbReference type="PANTHER" id="PTHR38432:SF1">
    <property type="entry name" value="TELA-LIKE PROTEIN SAOUHSC_01408"/>
    <property type="match status" value="1"/>
</dbReference>
<dbReference type="Pfam" id="PF05816">
    <property type="entry name" value="TelA"/>
    <property type="match status" value="1"/>
</dbReference>
<dbReference type="PIRSF" id="PIRSF026508">
    <property type="entry name" value="TelA"/>
    <property type="match status" value="1"/>
</dbReference>
<organism>
    <name type="scientific">Staphylococcus aureus (strain COL)</name>
    <dbReference type="NCBI Taxonomy" id="93062"/>
    <lineage>
        <taxon>Bacteria</taxon>
        <taxon>Bacillati</taxon>
        <taxon>Bacillota</taxon>
        <taxon>Bacilli</taxon>
        <taxon>Bacillales</taxon>
        <taxon>Staphylococcaceae</taxon>
        <taxon>Staphylococcus</taxon>
    </lineage>
</organism>
<feature type="chain" id="PRO_0000172802" description="TelA-like protein SACOL1441">
    <location>
        <begin position="1"/>
        <end position="378"/>
    </location>
</feature>
<accession>Q5HG14</accession>
<name>TELL_STAAC</name>
<evidence type="ECO:0000305" key="1"/>
<proteinExistence type="inferred from homology"/>
<comment type="similarity">
    <text evidence="1">Belongs to the TelA family.</text>
</comment>
<reference key="1">
    <citation type="journal article" date="2005" name="J. Bacteriol.">
        <title>Insights on evolution of virulence and resistance from the complete genome analysis of an early methicillin-resistant Staphylococcus aureus strain and a biofilm-producing methicillin-resistant Staphylococcus epidermidis strain.</title>
        <authorList>
            <person name="Gill S.R."/>
            <person name="Fouts D.E."/>
            <person name="Archer G.L."/>
            <person name="Mongodin E.F."/>
            <person name="DeBoy R.T."/>
            <person name="Ravel J."/>
            <person name="Paulsen I.T."/>
            <person name="Kolonay J.F."/>
            <person name="Brinkac L.M."/>
            <person name="Beanan M.J."/>
            <person name="Dodson R.J."/>
            <person name="Daugherty S.C."/>
            <person name="Madupu R."/>
            <person name="Angiuoli S.V."/>
            <person name="Durkin A.S."/>
            <person name="Haft D.H."/>
            <person name="Vamathevan J.J."/>
            <person name="Khouri H."/>
            <person name="Utterback T.R."/>
            <person name="Lee C."/>
            <person name="Dimitrov G."/>
            <person name="Jiang L."/>
            <person name="Qin H."/>
            <person name="Weidman J."/>
            <person name="Tran K."/>
            <person name="Kang K.H."/>
            <person name="Hance I.R."/>
            <person name="Nelson K.E."/>
            <person name="Fraser C.M."/>
        </authorList>
    </citation>
    <scope>NUCLEOTIDE SEQUENCE [LARGE SCALE GENOMIC DNA]</scope>
    <source>
        <strain>COL</strain>
    </source>
</reference>
<protein>
    <recommendedName>
        <fullName>TelA-like protein SACOL1441</fullName>
    </recommendedName>
</protein>
<sequence>MTENKSFKESHPLDDFISDKELSNTTIQKEKLTIEQQKQVDTISKQINPLDNEGLLAFGSDLQKQMSQFSHQMLDEVQSKDVGPIGDTLSDLMSKLKSVNPNELNTDKPSMLKRIFSRAKSSINEIFSRMQSVSAQVDRITIQLQKHQTHLTRDIELLDTLYDKNKQYFDDLSLHIIAAQQKKLQLENEKLPQLQQQAQQSTNQMDIQQVADMQQFIDRLDKRIYDLQLSRQIALQTAPQIRMIQNVNQALAEKIQSSILTSIPLWKNQMAIALTLMRQRNAVAAQRAVTDTTNDLLTANAEMLKQNAIETATENERGIVDLDTLKRTQRNIIETIEETLIIQQHGREERQLAEKELQQLEQDLKSHLVNIKGPNKQS</sequence>